<reference key="1">
    <citation type="submission" date="2007-08" db="EMBL/GenBank/DDBJ databases">
        <authorList>
            <consortium name="The Citrobacter koseri Genome Sequencing Project"/>
            <person name="McClelland M."/>
            <person name="Sanderson E.K."/>
            <person name="Porwollik S."/>
            <person name="Spieth J."/>
            <person name="Clifton W.S."/>
            <person name="Latreille P."/>
            <person name="Courtney L."/>
            <person name="Wang C."/>
            <person name="Pepin K."/>
            <person name="Bhonagiri V."/>
            <person name="Nash W."/>
            <person name="Johnson M."/>
            <person name="Thiruvilangam P."/>
            <person name="Wilson R."/>
        </authorList>
    </citation>
    <scope>NUCLEOTIDE SEQUENCE [LARGE SCALE GENOMIC DNA]</scope>
    <source>
        <strain>ATCC BAA-895 / CDC 4225-83 / SGSC4696</strain>
    </source>
</reference>
<proteinExistence type="inferred from homology"/>
<organism>
    <name type="scientific">Citrobacter koseri (strain ATCC BAA-895 / CDC 4225-83 / SGSC4696)</name>
    <dbReference type="NCBI Taxonomy" id="290338"/>
    <lineage>
        <taxon>Bacteria</taxon>
        <taxon>Pseudomonadati</taxon>
        <taxon>Pseudomonadota</taxon>
        <taxon>Gammaproteobacteria</taxon>
        <taxon>Enterobacterales</taxon>
        <taxon>Enterobacteriaceae</taxon>
        <taxon>Citrobacter</taxon>
    </lineage>
</organism>
<gene>
    <name evidence="1" type="primary">clpS</name>
    <name type="ordered locus">CKO_02199</name>
</gene>
<protein>
    <recommendedName>
        <fullName evidence="1">ATP-dependent Clp protease adapter protein ClpS</fullName>
    </recommendedName>
</protein>
<accession>A8AIK9</accession>
<feature type="chain" id="PRO_1000022605" description="ATP-dependent Clp protease adapter protein ClpS">
    <location>
        <begin position="1"/>
        <end position="106"/>
    </location>
</feature>
<evidence type="ECO:0000255" key="1">
    <source>
        <dbReference type="HAMAP-Rule" id="MF_00302"/>
    </source>
</evidence>
<dbReference type="EMBL" id="CP000822">
    <property type="protein sequence ID" value="ABV13322.1"/>
    <property type="molecule type" value="Genomic_DNA"/>
</dbReference>
<dbReference type="RefSeq" id="WP_012133050.1">
    <property type="nucleotide sequence ID" value="NC_009792.1"/>
</dbReference>
<dbReference type="SMR" id="A8AIK9"/>
<dbReference type="STRING" id="290338.CKO_02199"/>
<dbReference type="GeneID" id="45136127"/>
<dbReference type="KEGG" id="cko:CKO_02199"/>
<dbReference type="HOGENOM" id="CLU_134358_2_1_6"/>
<dbReference type="OrthoDB" id="9796121at2"/>
<dbReference type="Proteomes" id="UP000008148">
    <property type="component" value="Chromosome"/>
</dbReference>
<dbReference type="GO" id="GO:0030163">
    <property type="term" value="P:protein catabolic process"/>
    <property type="evidence" value="ECO:0007669"/>
    <property type="project" value="InterPro"/>
</dbReference>
<dbReference type="GO" id="GO:0006508">
    <property type="term" value="P:proteolysis"/>
    <property type="evidence" value="ECO:0007669"/>
    <property type="project" value="UniProtKB-UniRule"/>
</dbReference>
<dbReference type="FunFam" id="3.30.1390.10:FF:000002">
    <property type="entry name" value="ATP-dependent Clp protease adapter protein ClpS"/>
    <property type="match status" value="1"/>
</dbReference>
<dbReference type="Gene3D" id="3.30.1390.10">
    <property type="match status" value="1"/>
</dbReference>
<dbReference type="HAMAP" id="MF_00302">
    <property type="entry name" value="ClpS"/>
    <property type="match status" value="1"/>
</dbReference>
<dbReference type="InterPro" id="IPR022935">
    <property type="entry name" value="ClpS"/>
</dbReference>
<dbReference type="InterPro" id="IPR003769">
    <property type="entry name" value="ClpS_core"/>
</dbReference>
<dbReference type="InterPro" id="IPR014719">
    <property type="entry name" value="Ribosomal_bL12_C/ClpS-like"/>
</dbReference>
<dbReference type="NCBIfam" id="NF000670">
    <property type="entry name" value="PRK00033.1-3"/>
    <property type="match status" value="1"/>
</dbReference>
<dbReference type="NCBIfam" id="NF000672">
    <property type="entry name" value="PRK00033.1-5"/>
    <property type="match status" value="1"/>
</dbReference>
<dbReference type="PANTHER" id="PTHR33473:SF19">
    <property type="entry name" value="ATP-DEPENDENT CLP PROTEASE ADAPTER PROTEIN CLPS"/>
    <property type="match status" value="1"/>
</dbReference>
<dbReference type="PANTHER" id="PTHR33473">
    <property type="entry name" value="ATP-DEPENDENT CLP PROTEASE ADAPTER PROTEIN CLPS1, CHLOROPLASTIC"/>
    <property type="match status" value="1"/>
</dbReference>
<dbReference type="Pfam" id="PF02617">
    <property type="entry name" value="ClpS"/>
    <property type="match status" value="1"/>
</dbReference>
<dbReference type="SUPFAM" id="SSF54736">
    <property type="entry name" value="ClpS-like"/>
    <property type="match status" value="1"/>
</dbReference>
<keyword id="KW-1185">Reference proteome</keyword>
<sequence length="106" mass="12165">MGKTNDWLDFDQLAEDKVRDALKPPSMYKVILVNDDYTPMEFVIDVLQKFFSYDVERATQLMLAVHYQGKAICGVFTAEVAETKVAMVNKYARENEHPLLCTLEKA</sequence>
<comment type="function">
    <text evidence="1">Involved in the modulation of the specificity of the ClpAP-mediated ATP-dependent protein degradation.</text>
</comment>
<comment type="subunit">
    <text evidence="1">Binds to the N-terminal domain of the chaperone ClpA.</text>
</comment>
<comment type="similarity">
    <text evidence="1">Belongs to the ClpS family.</text>
</comment>
<name>CLPS_CITK8</name>